<keyword id="KW-0002">3D-structure</keyword>
<keyword id="KW-1185">Reference proteome</keyword>
<organism>
    <name type="scientific">Bordetella pertussis (strain Tohama I / ATCC BAA-589 / NCTC 13251)</name>
    <dbReference type="NCBI Taxonomy" id="257313"/>
    <lineage>
        <taxon>Bacteria</taxon>
        <taxon>Pseudomonadati</taxon>
        <taxon>Pseudomonadota</taxon>
        <taxon>Betaproteobacteria</taxon>
        <taxon>Burkholderiales</taxon>
        <taxon>Alcaligenaceae</taxon>
        <taxon>Bordetella</taxon>
    </lineage>
</organism>
<dbReference type="EMBL" id="BX640421">
    <property type="protein sequence ID" value="CAE43533.1"/>
    <property type="molecule type" value="Genomic_DNA"/>
</dbReference>
<dbReference type="RefSeq" id="NP_881811.1">
    <property type="nucleotide sequence ID" value="NC_002929.2"/>
</dbReference>
<dbReference type="PDB" id="1XQ4">
    <property type="method" value="X-ray"/>
    <property type="resolution" value="2.70 A"/>
    <property type="chains" value="A/B/C/D=1-131"/>
</dbReference>
<dbReference type="PDBsum" id="1XQ4"/>
<dbReference type="SMR" id="Q7VU61"/>
<dbReference type="STRING" id="257313.BP3267"/>
<dbReference type="PaxDb" id="257313-BP3267"/>
<dbReference type="KEGG" id="bpe:BP3267"/>
<dbReference type="PATRIC" id="fig|257313.5.peg.3538"/>
<dbReference type="eggNOG" id="COG2967">
    <property type="taxonomic scope" value="Bacteria"/>
</dbReference>
<dbReference type="HOGENOM" id="CLU_128074_0_0_4"/>
<dbReference type="EvolutionaryTrace" id="Q7VU61"/>
<dbReference type="Proteomes" id="UP000002676">
    <property type="component" value="Chromosome"/>
</dbReference>
<dbReference type="Gene3D" id="2.60.40.1470">
    <property type="entry name" value="ApaG domain"/>
    <property type="match status" value="1"/>
</dbReference>
<dbReference type="HAMAP" id="MF_00791">
    <property type="entry name" value="ApaG"/>
    <property type="match status" value="1"/>
</dbReference>
<dbReference type="InterPro" id="IPR050718">
    <property type="entry name" value="ApaG-like"/>
</dbReference>
<dbReference type="InterPro" id="IPR007474">
    <property type="entry name" value="ApaG_domain"/>
</dbReference>
<dbReference type="InterPro" id="IPR036767">
    <property type="entry name" value="ApaG_sf"/>
</dbReference>
<dbReference type="InterPro" id="IPR023065">
    <property type="entry name" value="Uncharacterised_ApaG"/>
</dbReference>
<dbReference type="NCBIfam" id="NF003967">
    <property type="entry name" value="PRK05461.1"/>
    <property type="match status" value="1"/>
</dbReference>
<dbReference type="PANTHER" id="PTHR47191">
    <property type="entry name" value="OS05G0170800 PROTEIN"/>
    <property type="match status" value="1"/>
</dbReference>
<dbReference type="PANTHER" id="PTHR47191:SF2">
    <property type="entry name" value="OS05G0170800 PROTEIN"/>
    <property type="match status" value="1"/>
</dbReference>
<dbReference type="Pfam" id="PF04379">
    <property type="entry name" value="DUF525"/>
    <property type="match status" value="1"/>
</dbReference>
<dbReference type="SUPFAM" id="SSF110069">
    <property type="entry name" value="ApaG-like"/>
    <property type="match status" value="1"/>
</dbReference>
<dbReference type="PROSITE" id="PS51087">
    <property type="entry name" value="APAG"/>
    <property type="match status" value="1"/>
</dbReference>
<protein>
    <recommendedName>
        <fullName evidence="1">Protein ApaG</fullName>
    </recommendedName>
</protein>
<evidence type="ECO:0000255" key="1">
    <source>
        <dbReference type="HAMAP-Rule" id="MF_00791"/>
    </source>
</evidence>
<evidence type="ECO:0007829" key="2">
    <source>
        <dbReference type="PDB" id="1XQ4"/>
    </source>
</evidence>
<proteinExistence type="evidence at protein level"/>
<reference key="1">
    <citation type="journal article" date="2003" name="Nat. Genet.">
        <title>Comparative analysis of the genome sequences of Bordetella pertussis, Bordetella parapertussis and Bordetella bronchiseptica.</title>
        <authorList>
            <person name="Parkhill J."/>
            <person name="Sebaihia M."/>
            <person name="Preston A."/>
            <person name="Murphy L.D."/>
            <person name="Thomson N.R."/>
            <person name="Harris D.E."/>
            <person name="Holden M.T.G."/>
            <person name="Churcher C.M."/>
            <person name="Bentley S.D."/>
            <person name="Mungall K.L."/>
            <person name="Cerdeno-Tarraga A.-M."/>
            <person name="Temple L."/>
            <person name="James K.D."/>
            <person name="Harris B."/>
            <person name="Quail M.A."/>
            <person name="Achtman M."/>
            <person name="Atkin R."/>
            <person name="Baker S."/>
            <person name="Basham D."/>
            <person name="Bason N."/>
            <person name="Cherevach I."/>
            <person name="Chillingworth T."/>
            <person name="Collins M."/>
            <person name="Cronin A."/>
            <person name="Davis P."/>
            <person name="Doggett J."/>
            <person name="Feltwell T."/>
            <person name="Goble A."/>
            <person name="Hamlin N."/>
            <person name="Hauser H."/>
            <person name="Holroyd S."/>
            <person name="Jagels K."/>
            <person name="Leather S."/>
            <person name="Moule S."/>
            <person name="Norberczak H."/>
            <person name="O'Neil S."/>
            <person name="Ormond D."/>
            <person name="Price C."/>
            <person name="Rabbinowitsch E."/>
            <person name="Rutter S."/>
            <person name="Sanders M."/>
            <person name="Saunders D."/>
            <person name="Seeger K."/>
            <person name="Sharp S."/>
            <person name="Simmonds M."/>
            <person name="Skelton J."/>
            <person name="Squares R."/>
            <person name="Squares S."/>
            <person name="Stevens K."/>
            <person name="Unwin L."/>
            <person name="Whitehead S."/>
            <person name="Barrell B.G."/>
            <person name="Maskell D.J."/>
        </authorList>
    </citation>
    <scope>NUCLEOTIDE SEQUENCE [LARGE SCALE GENOMIC DNA]</scope>
    <source>
        <strain>Tohama I / ATCC BAA-589 / NCTC 13251</strain>
    </source>
</reference>
<feature type="chain" id="PRO_0000197940" description="Protein ApaG">
    <location>
        <begin position="1"/>
        <end position="131"/>
    </location>
</feature>
<feature type="domain" description="ApaG" evidence="1">
    <location>
        <begin position="7"/>
        <end position="131"/>
    </location>
</feature>
<feature type="strand" evidence="2">
    <location>
        <begin position="13"/>
        <end position="21"/>
    </location>
</feature>
<feature type="helix" evidence="2">
    <location>
        <begin position="23"/>
        <end position="25"/>
    </location>
</feature>
<feature type="helix" evidence="2">
    <location>
        <begin position="28"/>
        <end position="30"/>
    </location>
</feature>
<feature type="strand" evidence="2">
    <location>
        <begin position="32"/>
        <end position="43"/>
    </location>
</feature>
<feature type="strand" evidence="2">
    <location>
        <begin position="45"/>
        <end position="47"/>
    </location>
</feature>
<feature type="strand" evidence="2">
    <location>
        <begin position="49"/>
        <end position="59"/>
    </location>
</feature>
<feature type="strand" evidence="2">
    <location>
        <begin position="65"/>
        <end position="75"/>
    </location>
</feature>
<feature type="strand" evidence="2">
    <location>
        <begin position="85"/>
        <end position="109"/>
    </location>
</feature>
<feature type="strand" evidence="2">
    <location>
        <begin position="114"/>
        <end position="125"/>
    </location>
</feature>
<name>APAG_BORPE</name>
<gene>
    <name evidence="1" type="primary">apaG</name>
    <name type="ordered locus">BP3267</name>
</gene>
<sequence>MSNRERPVKPYDLTVSVTPRYVPEQSDPSQQQYVFAYTVRITNTGSHPAQVISRHWIITDGEERVQEVRGLGVVGQQPLLAPGETFEYTSGCPLPTPIGTMRGTYHCVGENGIPFEVPIAEFLLAMPRTLH</sequence>
<accession>Q7VU61</accession>